<accession>Q65269</accession>
<feature type="chain" id="PRO_0000373312" description="Protein MGF 360-22R">
    <location>
        <begin position="1"/>
        <end position="357"/>
    </location>
</feature>
<feature type="repeat" description="ANK">
    <location>
        <begin position="66"/>
        <end position="98"/>
    </location>
</feature>
<comment type="function">
    <text evidence="1">Plays a role in virus cell tropism, and may be required for efficient virus replication in macrophages.</text>
</comment>
<comment type="similarity">
    <text evidence="2">Belongs to the asfivirus MGF 360 family.</text>
</comment>
<evidence type="ECO:0000250" key="1"/>
<evidence type="ECO:0000305" key="2"/>
<dbReference type="EMBL" id="X71982">
    <property type="protein sequence ID" value="CAA50867.1"/>
    <property type="molecule type" value="Genomic_DNA"/>
</dbReference>
<dbReference type="EMBL" id="AY261361">
    <property type="status" value="NOT_ANNOTATED_CDS"/>
    <property type="molecule type" value="Genomic_DNA"/>
</dbReference>
<dbReference type="Proteomes" id="UP000000860">
    <property type="component" value="Segment"/>
</dbReference>
<dbReference type="GO" id="GO:0042330">
    <property type="term" value="P:taxis"/>
    <property type="evidence" value="ECO:0007669"/>
    <property type="project" value="InterPro"/>
</dbReference>
<dbReference type="InterPro" id="IPR002595">
    <property type="entry name" value="ASFV_MGF360"/>
</dbReference>
<dbReference type="Pfam" id="PF01671">
    <property type="entry name" value="ASFV_360"/>
    <property type="match status" value="1"/>
</dbReference>
<reference key="1">
    <citation type="journal article" date="1993" name="J. Gen. Virol.">
        <title>Duplicated genes within the variable right end of the genome of a pathogenic isolate of African swine fever virus.</title>
        <authorList>
            <person name="Vydelingum S."/>
            <person name="Baylis S.A."/>
            <person name="Bristow C."/>
            <person name="Smith G.L."/>
            <person name="Dixon L.K."/>
        </authorList>
    </citation>
    <scope>NUCLEOTIDE SEQUENCE [GENOMIC DNA]</scope>
</reference>
<reference key="2">
    <citation type="journal article" date="1994" name="J. Gen. Virol.">
        <title>Nucleotide sequence of a 55 kbp region from the right end of the genome of a pathogenic African swine fever virus isolate (Malawi LIL20/1).</title>
        <authorList>
            <person name="Dixon L.K."/>
            <person name="Twigg S.R.F."/>
            <person name="Baylis S.A."/>
            <person name="Vydelingum S."/>
            <person name="Bristow C."/>
            <person name="Hammond J.M."/>
            <person name="Smith G.L."/>
        </authorList>
    </citation>
    <scope>NUCLEOTIDE SEQUENCE [GENOMIC DNA]</scope>
</reference>
<reference key="3">
    <citation type="submission" date="2003-03" db="EMBL/GenBank/DDBJ databases">
        <title>African swine fever virus genomes.</title>
        <authorList>
            <person name="Kutish G.F."/>
            <person name="Rock D.L."/>
        </authorList>
    </citation>
    <scope>NUCLEOTIDE SEQUENCE [LARGE SCALE GENOMIC DNA]</scope>
</reference>
<sequence length="357" mass="41658">MMPSTLQTLAKKTLATQHISKKYWPSEEYCYILKCCGLWWHDSPITIFTCIKQILIKTANFKHGLDLNLALMKAVQENNYELIMLFTEWGADINLGLITVNTECTRDLCQKLGAKEALSAKEILEIFYKIQYIKSSNNIIISHELISNHPLFLNNDQLKLRIVGELNAISINFILDEISFNEMLTRYWYSMAILYKLPAAIQYFYQSYKYFKDWRLICSLAYNNVFDLHEIYNKEKTDINIDEMMRLACRYDGNYTTIYYCFMLGADINQAMITSVMNLWDGNLFLCIDLGADVFEECMKIAIEDHNGVLESILSFKNYYSPDVSLLSLKTTDPEKINDLLDEDIYKSKNRLIYKSC</sequence>
<proteinExistence type="inferred from homology"/>
<organism>
    <name type="scientific">African swine fever virus (isolate Tick/Malawi/Lil 20-1/1983)</name>
    <name type="common">ASFV</name>
    <dbReference type="NCBI Taxonomy" id="10500"/>
    <lineage>
        <taxon>Viruses</taxon>
        <taxon>Varidnaviria</taxon>
        <taxon>Bamfordvirae</taxon>
        <taxon>Nucleocytoviricota</taxon>
        <taxon>Pokkesviricetes</taxon>
        <taxon>Asfuvirales</taxon>
        <taxon>Asfarviridae</taxon>
        <taxon>Asfivirus</taxon>
        <taxon>African swine fever virus</taxon>
    </lineage>
</organism>
<keyword id="KW-0040">ANK repeat</keyword>
<organismHost>
    <name type="scientific">Ornithodoros</name>
    <name type="common">relapsing fever ticks</name>
    <dbReference type="NCBI Taxonomy" id="6937"/>
</organismHost>
<organismHost>
    <name type="scientific">Phacochoerus aethiopicus</name>
    <name type="common">Warthog</name>
    <dbReference type="NCBI Taxonomy" id="85517"/>
</organismHost>
<organismHost>
    <name type="scientific">Phacochoerus africanus</name>
    <name type="common">Warthog</name>
    <dbReference type="NCBI Taxonomy" id="41426"/>
</organismHost>
<organismHost>
    <name type="scientific">Potamochoerus larvatus</name>
    <name type="common">Bushpig</name>
    <dbReference type="NCBI Taxonomy" id="273792"/>
</organismHost>
<organismHost>
    <name type="scientific">Sus scrofa</name>
    <name type="common">Pig</name>
    <dbReference type="NCBI Taxonomy" id="9823"/>
</organismHost>
<name>36022_ASFM2</name>
<protein>
    <recommendedName>
        <fullName>Protein MGF 360-22R</fullName>
    </recommendedName>
</protein>
<gene>
    <name type="ordered locus">Mal-167</name>
    <name type="ORF">l15R</name>
</gene>